<feature type="chain" id="PRO_0000451623" description="Serine/threonine-protein acetyltransferase YopJ">
    <location>
        <begin position="1"/>
        <end position="288"/>
    </location>
</feature>
<feature type="active site" evidence="2">
    <location>
        <position position="109"/>
    </location>
</feature>
<feature type="active site" evidence="2">
    <location>
        <position position="128"/>
    </location>
</feature>
<feature type="active site" evidence="13 14">
    <location>
        <position position="172"/>
    </location>
</feature>
<feature type="binding site" evidence="2">
    <location>
        <position position="109"/>
    </location>
    <ligand>
        <name>CoA</name>
        <dbReference type="ChEBI" id="CHEBI:57287"/>
    </ligand>
</feature>
<feature type="binding site" evidence="2">
    <location>
        <begin position="167"/>
        <end position="168"/>
    </location>
    <ligand>
        <name>CoA</name>
        <dbReference type="ChEBI" id="CHEBI:57287"/>
    </ligand>
</feature>
<feature type="binding site" evidence="2">
    <location>
        <begin position="182"/>
        <end position="185"/>
    </location>
    <ligand>
        <name>1D-myo-inositol hexakisphosphate</name>
        <dbReference type="ChEBI" id="CHEBI:58130"/>
    </ligand>
</feature>
<feature type="binding site" evidence="2">
    <location>
        <begin position="224"/>
        <end position="225"/>
    </location>
    <ligand>
        <name>1D-myo-inositol hexakisphosphate</name>
        <dbReference type="ChEBI" id="CHEBI:58130"/>
    </ligand>
</feature>
<feature type="binding site" evidence="2">
    <location>
        <begin position="227"/>
        <end position="230"/>
    </location>
    <ligand>
        <name>CoA</name>
        <dbReference type="ChEBI" id="CHEBI:57287"/>
    </ligand>
</feature>
<feature type="binding site" evidence="2">
    <location>
        <position position="257"/>
    </location>
    <ligand>
        <name>1D-myo-inositol hexakisphosphate</name>
        <dbReference type="ChEBI" id="CHEBI:58130"/>
    </ligand>
</feature>
<feature type="binding site" evidence="2">
    <location>
        <begin position="266"/>
        <end position="270"/>
    </location>
    <ligand>
        <name>CoA</name>
        <dbReference type="ChEBI" id="CHEBI:57287"/>
    </ligand>
</feature>
<feature type="mutagenesis site" description="Abolished serine/threonine-protein acetyltransferase activity." evidence="3 5">
    <original>C</original>
    <variation>A</variation>
    <location>
        <position position="172"/>
    </location>
</feature>
<geneLocation type="plasmid" evidence="15">
    <name>pCD1</name>
</geneLocation>
<keyword id="KW-0012">Acyltransferase</keyword>
<keyword id="KW-0614">Plasmid</keyword>
<keyword id="KW-0964">Secreted</keyword>
<keyword id="KW-0808">Transferase</keyword>
<keyword id="KW-0843">Virulence</keyword>
<name>YOPJ_YERPE</name>
<organism>
    <name type="scientific">Yersinia pestis</name>
    <dbReference type="NCBI Taxonomy" id="632"/>
    <lineage>
        <taxon>Bacteria</taxon>
        <taxon>Pseudomonadati</taxon>
        <taxon>Pseudomonadota</taxon>
        <taxon>Gammaproteobacteria</taxon>
        <taxon>Enterobacterales</taxon>
        <taxon>Yersiniaceae</taxon>
        <taxon>Yersinia</taxon>
    </lineage>
</organism>
<evidence type="ECO:0000250" key="1">
    <source>
        <dbReference type="UniProtKB" id="P0DUD0"/>
    </source>
</evidence>
<evidence type="ECO:0000250" key="2">
    <source>
        <dbReference type="UniProtKB" id="Q6VE93"/>
    </source>
</evidence>
<evidence type="ECO:0000269" key="3">
    <source>
    </source>
</evidence>
<evidence type="ECO:0000269" key="4">
    <source>
    </source>
</evidence>
<evidence type="ECO:0000269" key="5">
    <source>
    </source>
</evidence>
<evidence type="ECO:0000269" key="6">
    <source>
    </source>
</evidence>
<evidence type="ECO:0000269" key="7">
    <source>
    </source>
</evidence>
<evidence type="ECO:0000269" key="8">
    <source>
    </source>
</evidence>
<evidence type="ECO:0000303" key="9">
    <source>
    </source>
</evidence>
<evidence type="ECO:0000303" key="10">
    <source>
    </source>
</evidence>
<evidence type="ECO:0000303" key="11">
    <source>
    </source>
</evidence>
<evidence type="ECO:0000305" key="12"/>
<evidence type="ECO:0000305" key="13">
    <source>
    </source>
</evidence>
<evidence type="ECO:0000305" key="14">
    <source>
    </source>
</evidence>
<evidence type="ECO:0000312" key="15">
    <source>
        <dbReference type="EMBL" id="AAC62603.1"/>
    </source>
</evidence>
<proteinExistence type="evidence at protein level"/>
<comment type="function">
    <text evidence="3 4 5 6 7 8">Serine/threonine-protein acetyltransferase translocated into infected cells, which inhibits the host immune response and induces cell death by mediating acetylation of target proteins (PubMed:20430892, PubMed:22563435, PubMed:22802624, PubMed:26810037). Inhibits the MAPK and NF-kappa-B signaling pathways by acetylating protein-kinases such as MAP2K1, MAP2K6, MAP3K7/TAK1 and I-kappa-B kinase (CHUK/IKKA and IKBKB) on serine and threonine residues critical for their activation by phosphorylation, thereby preventing protein-kinase activation (PubMed:20430892, PubMed:22802624). Promotes pyroptosis, a programmed cell death, in host cells by mediating acetylation of MAP3K7/TAK1: MAP3K7/TAK1 inactivation triggers activation of caspase-8 (CASP8), followed by CASP8-dependent cleavage of gasdermin-D (GSDMD) and induction of pyroptosis (PubMed:30361383, PubMed:30381458).</text>
</comment>
<comment type="catalytic activity">
    <reaction evidence="5">
        <text>L-threonyl-[protein] + acetyl-CoA = O-acetyl-L-threonyl-[protein] + CoA</text>
        <dbReference type="Rhea" id="RHEA:65340"/>
        <dbReference type="Rhea" id="RHEA-COMP:11060"/>
        <dbReference type="Rhea" id="RHEA-COMP:16780"/>
        <dbReference type="ChEBI" id="CHEBI:30013"/>
        <dbReference type="ChEBI" id="CHEBI:57287"/>
        <dbReference type="ChEBI" id="CHEBI:57288"/>
        <dbReference type="ChEBI" id="CHEBI:141025"/>
    </reaction>
    <physiologicalReaction direction="left-to-right" evidence="5">
        <dbReference type="Rhea" id="RHEA:65341"/>
    </physiologicalReaction>
</comment>
<comment type="catalytic activity">
    <reaction evidence="5">
        <text>L-seryl-[protein] + acetyl-CoA = O-acetyl-L-seryl-[protein] + CoA</text>
        <dbReference type="Rhea" id="RHEA:59392"/>
        <dbReference type="Rhea" id="RHEA-COMP:9863"/>
        <dbReference type="Rhea" id="RHEA-COMP:15352"/>
        <dbReference type="ChEBI" id="CHEBI:29999"/>
        <dbReference type="ChEBI" id="CHEBI:57287"/>
        <dbReference type="ChEBI" id="CHEBI:57288"/>
        <dbReference type="ChEBI" id="CHEBI:141128"/>
    </reaction>
    <physiologicalReaction direction="left-to-right" evidence="5">
        <dbReference type="Rhea" id="RHEA:59393"/>
    </physiologicalReaction>
</comment>
<comment type="cofactor">
    <cofactor evidence="3">
        <name>1D-myo-inositol hexakisphosphate</name>
        <dbReference type="ChEBI" id="CHEBI:58130"/>
    </cofactor>
</comment>
<comment type="activity regulation">
    <text evidence="2">1D-myo-inositol hexakisphosphate activates protein-acetyltransferase activity via an allosteric mechanism: 1D-myo-inositol hexakisphosphate-binding induces a conformational rearrangement that stimulates the interaction with acetyl-CoA.</text>
</comment>
<comment type="subcellular location">
    <subcellularLocation>
        <location evidence="1">Secreted</location>
    </subcellularLocation>
    <text evidence="1">Secreted via type III secretion system (T3SS).</text>
</comment>
<comment type="similarity">
    <text evidence="12">Belongs to the acetyltransferase YopJ family.</text>
</comment>
<dbReference type="EC" id="2.3.1.-" evidence="5"/>
<dbReference type="EMBL" id="AF053946">
    <property type="protein sequence ID" value="AAC62603.1"/>
    <property type="molecule type" value="Genomic_DNA"/>
</dbReference>
<dbReference type="EMBL" id="AF074612">
    <property type="protein sequence ID" value="AAC69766.1"/>
    <property type="molecule type" value="Genomic_DNA"/>
</dbReference>
<dbReference type="EMBL" id="JAAIKW010000129">
    <property type="protein sequence ID" value="NEX98940.1"/>
    <property type="molecule type" value="Genomic_DNA"/>
</dbReference>
<dbReference type="EMBL" id="JAAIKY010000170">
    <property type="protein sequence ID" value="NEY10904.1"/>
    <property type="molecule type" value="Genomic_DNA"/>
</dbReference>
<dbReference type="PIR" id="T43620">
    <property type="entry name" value="T43620"/>
</dbReference>
<dbReference type="RefSeq" id="NP_857777.1">
    <property type="nucleotide sequence ID" value="NC_004836.1"/>
</dbReference>
<dbReference type="RefSeq" id="NP_857908.1">
    <property type="nucleotide sequence ID" value="NC_004839.1"/>
</dbReference>
<dbReference type="RefSeq" id="WP_002224250.1">
    <property type="nucleotide sequence ID" value="NZ_WUCM01000117.1"/>
</dbReference>
<dbReference type="SMR" id="O68718"/>
<dbReference type="MEROPS" id="C55.001"/>
<dbReference type="PATRIC" id="fig|632.152.peg.4449"/>
<dbReference type="GO" id="GO:0005576">
    <property type="term" value="C:extracellular region"/>
    <property type="evidence" value="ECO:0007669"/>
    <property type="project" value="UniProtKB-SubCell"/>
</dbReference>
<dbReference type="GO" id="GO:0016746">
    <property type="term" value="F:acyltransferase activity"/>
    <property type="evidence" value="ECO:0007669"/>
    <property type="project" value="UniProtKB-KW"/>
</dbReference>
<dbReference type="InterPro" id="IPR005083">
    <property type="entry name" value="YopJ-like"/>
</dbReference>
<dbReference type="NCBIfam" id="NF011898">
    <property type="entry name" value="PRK15371.1"/>
    <property type="match status" value="1"/>
</dbReference>
<dbReference type="NCBIfam" id="NF040632">
    <property type="entry name" value="YopJ_YopP_only"/>
    <property type="match status" value="1"/>
</dbReference>
<dbReference type="Pfam" id="PF03421">
    <property type="entry name" value="Acetyltransf_14"/>
    <property type="match status" value="1"/>
</dbReference>
<sequence>MIGPISQINISGGLSEKETSSLISNEELKNIITQLETDISDGSWFHKNYSRMDVEVMPALVIQANNKYPEMNLNLVTSPLDLSIEIKNVIENGVRSSRFIINMGEGGIHFSVIDYKHINGKTSLILFEPANFNSMGPAMLAIRTKTAIERYQLPDCHFSMVEMDIQRSSSECGIFSLALAKKLYIERDSLLKIHEDNIKGILSDGENPLPHDKLDPYLPVTFYKHTQGKKRLNEYLNTNPQGVGTVVNKKNETIVNRFDNNKSIVDGKELSVSVHKKRIAEYKTLLKV</sequence>
<accession>O68718</accession>
<accession>A0A6B3T9G8</accession>
<reference key="1">
    <citation type="journal article" date="1998" name="Infect. Immun.">
        <title>DNA sequencing and analysis of the low-Ca2+-response plasmid pCD1 of Yersinia pestis KIM5.</title>
        <authorList>
            <person name="Perry R.D."/>
            <person name="Straley S.C."/>
            <person name="Fetherston J.D."/>
            <person name="Rose D.J."/>
            <person name="Gregor J."/>
            <person name="Blattner F.R."/>
        </authorList>
    </citation>
    <scope>NUCLEOTIDE SEQUENCE [GENOMIC DNA]</scope>
    <source>
        <strain>KIM5 / Biovar Mediaevalis</strain>
    </source>
</reference>
<reference key="2">
    <citation type="journal article" date="1998" name="J. Bacteriol.">
        <title>Structural organization of virulence-associated plasmids of Yersinia pestis.</title>
        <authorList>
            <person name="Hu P."/>
            <person name="Elliott J."/>
            <person name="McCready P."/>
            <person name="Skowronski E."/>
            <person name="Garnes J."/>
            <person name="Kobayashi A."/>
            <person name="Brubaker R.R."/>
            <person name="Garcia E."/>
        </authorList>
    </citation>
    <scope>NUCLEOTIDE SEQUENCE [GENOMIC DNA]</scope>
    <source>
        <strain>KIM5 / Biovar Mediaevalis</strain>
    </source>
</reference>
<reference key="3">
    <citation type="submission" date="2020-02" db="EMBL/GenBank/DDBJ databases">
        <authorList>
            <person name="Balykova A."/>
            <person name="Alhova Z."/>
            <person name="Eroshenko G."/>
            <person name="Kukleva L."/>
            <person name="Chervyakova N."/>
            <person name="Kyturev V."/>
        </authorList>
    </citation>
    <scope>NUCLEOTIDE SEQUENCE [GENOMIC DNA]</scope>
    <source>
        <strain>31</strain>
    </source>
</reference>
<reference key="4">
    <citation type="submission" date="2020-02" db="EMBL/GenBank/DDBJ databases">
        <authorList>
            <person name="Eroshenko G."/>
            <person name="Alhova Z.A."/>
            <person name="Balykova A."/>
            <person name="Kukleva L."/>
            <person name="Chervyakova N."/>
            <person name="Krasnov Y."/>
            <person name="Kyturev V."/>
        </authorList>
    </citation>
    <scope>NUCLEOTIDE SEQUENCE [GENOMIC DNA]</scope>
    <source>
        <strain>578</strain>
    </source>
</reference>
<reference key="5">
    <citation type="journal article" date="2010" name="J. Biol. Chem.">
        <title>The acetyltransferase activity of the bacterial toxin YopJ of Yersinia is activated by eukaryotic host cell inositol hexakisphosphate.</title>
        <authorList>
            <person name="Mittal R."/>
            <person name="Peak-Chew S.Y."/>
            <person name="Sade R.S."/>
            <person name="Vallis Y."/>
            <person name="McMahon H.T."/>
        </authorList>
    </citation>
    <scope>FUNCTION</scope>
    <scope>COFACTOR</scope>
    <scope>ACTIVE SITE</scope>
    <scope>MUTAGENESIS OF CYS-172</scope>
    <source>
        <strain>KIM5 / Biovar Mediaevalis</strain>
    </source>
</reference>
<reference key="6">
    <citation type="journal article" date="2012" name="PLoS ONE">
        <title>YopJ-induced caspase-1 activation in Yersinia-infected macrophages: independent of apoptosis, linked to necrosis, dispensable for innate host defense.</title>
        <authorList>
            <person name="Zheng Y."/>
            <person name="Lilo S."/>
            <person name="Mena P."/>
            <person name="Bliska J.B."/>
        </authorList>
    </citation>
    <scope>FUNCTION</scope>
    <source>
        <strain>KIM5 / Biovar Mediaevalis</strain>
    </source>
</reference>
<reference key="7">
    <citation type="journal article" date="2012" name="Proc. Natl. Acad. Sci. U.S.A.">
        <title>Serine/threonine acetylation of TGFbeta-activated kinase (TAK1) by Yersinia pestis YopJ inhibits innate immune signaling.</title>
        <authorList>
            <person name="Paquette N."/>
            <person name="Conlon J."/>
            <person name="Sweet C."/>
            <person name="Rus F."/>
            <person name="Wilson L."/>
            <person name="Pereira A."/>
            <person name="Rosadini C.V."/>
            <person name="Goutagny N."/>
            <person name="Weber A.N."/>
            <person name="Lane W.S."/>
            <person name="Shaffer S.A."/>
            <person name="Maniatis S."/>
            <person name="Fitzgerald K.A."/>
            <person name="Stuart L."/>
            <person name="Silverman N."/>
        </authorList>
    </citation>
    <scope>FUNCTION</scope>
    <scope>CATALYTIC ACTIVITY</scope>
    <scope>ACTIVE SITE</scope>
    <scope>MUTAGENESIS OF CYS-172</scope>
    <source>
        <strain>KIM5 / Biovar Mediaevalis</strain>
    </source>
</reference>
<reference key="8">
    <citation type="journal article" date="2016" name="Infect. Immun.">
        <title>Uncovering an Important Role for YopJ in the Inhibition of Caspase-1 in Activated Macrophages and Promoting Yersinia pseudotuberculosis Virulence.</title>
        <authorList>
            <person name="Schoberle T.J."/>
            <person name="Chung L.K."/>
            <person name="McPhee J.B."/>
            <person name="Bogin B."/>
            <person name="Bliska J.B."/>
        </authorList>
    </citation>
    <scope>FUNCTION</scope>
    <source>
        <strain>KIM5 / Biovar Mediaevalis</strain>
    </source>
</reference>
<reference key="9">
    <citation type="journal article" date="2018" name="Proc. Natl. Acad. Sci. U.S.A.">
        <title>Caspase-8 induces cleavage of gasdermin D to elicit pyroptosis during Yersinia infection.</title>
        <authorList>
            <person name="Sarhan J."/>
            <person name="Liu B.C."/>
            <person name="Muendlein H.I."/>
            <person name="Li P."/>
            <person name="Nilson R."/>
            <person name="Tang A.Y."/>
            <person name="Rongvaux A."/>
            <person name="Bunnell S.C."/>
            <person name="Shao F."/>
            <person name="Green D.R."/>
            <person name="Poltorak A."/>
        </authorList>
    </citation>
    <scope>FUNCTION</scope>
</reference>
<reference key="10">
    <citation type="journal article" date="2018" name="Science">
        <title>Pathogen blockade of TAK1 triggers caspase-8-dependent cleavage of gasdermin D and cell death.</title>
        <authorList>
            <person name="Orning P."/>
            <person name="Weng D."/>
            <person name="Starheim K."/>
            <person name="Ratner D."/>
            <person name="Best Z."/>
            <person name="Lee B."/>
            <person name="Brooks A."/>
            <person name="Xia S."/>
            <person name="Wu H."/>
            <person name="Kelliher M.A."/>
            <person name="Berger S.B."/>
            <person name="Gough P.J."/>
            <person name="Bertin J."/>
            <person name="Proulx M.M."/>
            <person name="Goguen J.D."/>
            <person name="Kayagaki N."/>
            <person name="Fitzgerald K.A."/>
            <person name="Lien E."/>
        </authorList>
    </citation>
    <scope>FUNCTION</scope>
    <source>
        <strain>KIM5 / Biovar Mediaevalis</strain>
    </source>
</reference>
<gene>
    <name evidence="9" type="primary">yopJ</name>
    <name evidence="11" type="synonym">Y0010</name>
    <name evidence="10" type="synonym">yopP</name>
</gene>
<protein>
    <recommendedName>
        <fullName evidence="12">Serine/threonine-protein acetyltransferase YopJ</fullName>
        <ecNumber evidence="5">2.3.1.-</ecNumber>
    </recommendedName>
    <alternativeName>
        <fullName evidence="12">Virulence factor YopJ</fullName>
    </alternativeName>
</protein>